<protein>
    <recommendedName>
        <fullName evidence="1">Molybdenum cofactor guanylyltransferase</fullName>
        <shortName evidence="1">MoCo guanylyltransferase</shortName>
        <ecNumber evidence="1">2.7.7.77</ecNumber>
    </recommendedName>
    <alternativeName>
        <fullName evidence="1">GTP:molybdopterin guanylyltransferase</fullName>
    </alternativeName>
    <alternativeName>
        <fullName evidence="1">Mo-MPT guanylyltransferase</fullName>
    </alternativeName>
    <alternativeName>
        <fullName evidence="1">Molybdopterin guanylyltransferase</fullName>
    </alternativeName>
    <alternativeName>
        <fullName evidence="1">Molybdopterin-guanine dinucleotide synthase</fullName>
        <shortName evidence="1">MGD synthase</shortName>
    </alternativeName>
</protein>
<dbReference type="EC" id="2.7.7.77" evidence="1"/>
<dbReference type="EMBL" id="AE014291">
    <property type="protein sequence ID" value="AAN29882.1"/>
    <property type="molecule type" value="Genomic_DNA"/>
</dbReference>
<dbReference type="EMBL" id="CP002997">
    <property type="protein sequence ID" value="AEM18299.1"/>
    <property type="molecule type" value="Genomic_DNA"/>
</dbReference>
<dbReference type="RefSeq" id="WP_002964077.1">
    <property type="nucleotide sequence ID" value="NZ_KN046804.1"/>
</dbReference>
<dbReference type="SMR" id="Q8G0X5"/>
<dbReference type="KEGG" id="bms:BR0957"/>
<dbReference type="KEGG" id="bsi:BS1330_I0953"/>
<dbReference type="HOGENOM" id="CLU_055597_5_0_5"/>
<dbReference type="Proteomes" id="UP000007104">
    <property type="component" value="Chromosome I"/>
</dbReference>
<dbReference type="GO" id="GO:0005737">
    <property type="term" value="C:cytoplasm"/>
    <property type="evidence" value="ECO:0007669"/>
    <property type="project" value="UniProtKB-SubCell"/>
</dbReference>
<dbReference type="GO" id="GO:0005525">
    <property type="term" value="F:GTP binding"/>
    <property type="evidence" value="ECO:0007669"/>
    <property type="project" value="UniProtKB-UniRule"/>
</dbReference>
<dbReference type="GO" id="GO:0046872">
    <property type="term" value="F:metal ion binding"/>
    <property type="evidence" value="ECO:0007669"/>
    <property type="project" value="UniProtKB-KW"/>
</dbReference>
<dbReference type="GO" id="GO:0061603">
    <property type="term" value="F:molybdenum cofactor guanylyltransferase activity"/>
    <property type="evidence" value="ECO:0007669"/>
    <property type="project" value="UniProtKB-EC"/>
</dbReference>
<dbReference type="GO" id="GO:1902758">
    <property type="term" value="P:bis(molybdopterin guanine dinucleotide)molybdenum biosynthetic process"/>
    <property type="evidence" value="ECO:0007669"/>
    <property type="project" value="TreeGrafter"/>
</dbReference>
<dbReference type="CDD" id="cd02503">
    <property type="entry name" value="MobA"/>
    <property type="match status" value="1"/>
</dbReference>
<dbReference type="Gene3D" id="3.90.550.10">
    <property type="entry name" value="Spore Coat Polysaccharide Biosynthesis Protein SpsA, Chain A"/>
    <property type="match status" value="1"/>
</dbReference>
<dbReference type="HAMAP" id="MF_00316">
    <property type="entry name" value="MobA"/>
    <property type="match status" value="1"/>
</dbReference>
<dbReference type="InterPro" id="IPR025877">
    <property type="entry name" value="MobA-like_NTP_Trfase"/>
</dbReference>
<dbReference type="InterPro" id="IPR013482">
    <property type="entry name" value="Molybde_CF_guanTrfase"/>
</dbReference>
<dbReference type="InterPro" id="IPR029044">
    <property type="entry name" value="Nucleotide-diphossugar_trans"/>
</dbReference>
<dbReference type="PANTHER" id="PTHR19136">
    <property type="entry name" value="MOLYBDENUM COFACTOR GUANYLYLTRANSFERASE"/>
    <property type="match status" value="1"/>
</dbReference>
<dbReference type="PANTHER" id="PTHR19136:SF81">
    <property type="entry name" value="MOLYBDENUM COFACTOR GUANYLYLTRANSFERASE"/>
    <property type="match status" value="1"/>
</dbReference>
<dbReference type="Pfam" id="PF12804">
    <property type="entry name" value="NTP_transf_3"/>
    <property type="match status" value="1"/>
</dbReference>
<dbReference type="SUPFAM" id="SSF53448">
    <property type="entry name" value="Nucleotide-diphospho-sugar transferases"/>
    <property type="match status" value="1"/>
</dbReference>
<name>MOBA_BRUSU</name>
<reference key="1">
    <citation type="journal article" date="2002" name="Proc. Natl. Acad. Sci. U.S.A.">
        <title>The Brucella suis genome reveals fundamental similarities between animal and plant pathogens and symbionts.</title>
        <authorList>
            <person name="Paulsen I.T."/>
            <person name="Seshadri R."/>
            <person name="Nelson K.E."/>
            <person name="Eisen J.A."/>
            <person name="Heidelberg J.F."/>
            <person name="Read T.D."/>
            <person name="Dodson R.J."/>
            <person name="Umayam L.A."/>
            <person name="Brinkac L.M."/>
            <person name="Beanan M.J."/>
            <person name="Daugherty S.C."/>
            <person name="DeBoy R.T."/>
            <person name="Durkin A.S."/>
            <person name="Kolonay J.F."/>
            <person name="Madupu R."/>
            <person name="Nelson W.C."/>
            <person name="Ayodeji B."/>
            <person name="Kraul M."/>
            <person name="Shetty J."/>
            <person name="Malek J.A."/>
            <person name="Van Aken S.E."/>
            <person name="Riedmuller S."/>
            <person name="Tettelin H."/>
            <person name="Gill S.R."/>
            <person name="White O."/>
            <person name="Salzberg S.L."/>
            <person name="Hoover D.L."/>
            <person name="Lindler L.E."/>
            <person name="Halling S.M."/>
            <person name="Boyle S.M."/>
            <person name="Fraser C.M."/>
        </authorList>
    </citation>
    <scope>NUCLEOTIDE SEQUENCE [LARGE SCALE GENOMIC DNA]</scope>
    <source>
        <strain>1330</strain>
    </source>
</reference>
<reference key="2">
    <citation type="journal article" date="2011" name="J. Bacteriol.">
        <title>Revised genome sequence of Brucella suis 1330.</title>
        <authorList>
            <person name="Tae H."/>
            <person name="Shallom S."/>
            <person name="Settlage R."/>
            <person name="Preston D."/>
            <person name="Adams L.G."/>
            <person name="Garner H.R."/>
        </authorList>
    </citation>
    <scope>NUCLEOTIDE SEQUENCE [LARGE SCALE GENOMIC DNA]</scope>
    <source>
        <strain>1330</strain>
    </source>
</reference>
<sequence>MRAGQPKITGAKITGAIIAGGQSSRMQAGGVSGDKFLQPLGSAPVIAHVIARLQPQVDTLFINSKGDLSRFAAFGLPAVKDIAMNHGGPLVGLLTCLAHASPCRLLLTSAADTPFLPCDLASNLIRKQAETGARIILACSNERVHPIVGLWHTDLVPDLEKWLQHAEKASIFWFAKHIGFEVVNIPLAHAPRLAESYDPFFNINLPDDLLKAREINEALQA</sequence>
<feature type="chain" id="PRO_0000134883" description="Molybdenum cofactor guanylyltransferase">
    <location>
        <begin position="1"/>
        <end position="221"/>
    </location>
</feature>
<feature type="binding site" evidence="1">
    <location>
        <begin position="18"/>
        <end position="20"/>
    </location>
    <ligand>
        <name>GTP</name>
        <dbReference type="ChEBI" id="CHEBI:37565"/>
    </ligand>
</feature>
<feature type="binding site" evidence="1">
    <location>
        <position position="35"/>
    </location>
    <ligand>
        <name>GTP</name>
        <dbReference type="ChEBI" id="CHEBI:37565"/>
    </ligand>
</feature>
<feature type="binding site" evidence="1">
    <location>
        <position position="63"/>
    </location>
    <ligand>
        <name>GTP</name>
        <dbReference type="ChEBI" id="CHEBI:37565"/>
    </ligand>
</feature>
<feature type="binding site" evidence="1">
    <location>
        <position position="81"/>
    </location>
    <ligand>
        <name>GTP</name>
        <dbReference type="ChEBI" id="CHEBI:37565"/>
    </ligand>
</feature>
<feature type="binding site" evidence="1">
    <location>
        <position position="112"/>
    </location>
    <ligand>
        <name>GTP</name>
        <dbReference type="ChEBI" id="CHEBI:37565"/>
    </ligand>
</feature>
<feature type="binding site" evidence="1">
    <location>
        <position position="112"/>
    </location>
    <ligand>
        <name>Mg(2+)</name>
        <dbReference type="ChEBI" id="CHEBI:18420"/>
    </ligand>
</feature>
<organism>
    <name type="scientific">Brucella suis biovar 1 (strain 1330)</name>
    <dbReference type="NCBI Taxonomy" id="204722"/>
    <lineage>
        <taxon>Bacteria</taxon>
        <taxon>Pseudomonadati</taxon>
        <taxon>Pseudomonadota</taxon>
        <taxon>Alphaproteobacteria</taxon>
        <taxon>Hyphomicrobiales</taxon>
        <taxon>Brucellaceae</taxon>
        <taxon>Brucella/Ochrobactrum group</taxon>
        <taxon>Brucella</taxon>
    </lineage>
</organism>
<gene>
    <name evidence="1" type="primary">mobA</name>
    <name type="ordered locus">BS1330_I0953</name>
    <name type="ordered locus">BR0957</name>
</gene>
<accession>Q8G0X5</accession>
<accession>G0K9N3</accession>
<evidence type="ECO:0000255" key="1">
    <source>
        <dbReference type="HAMAP-Rule" id="MF_00316"/>
    </source>
</evidence>
<proteinExistence type="inferred from homology"/>
<keyword id="KW-0963">Cytoplasm</keyword>
<keyword id="KW-0342">GTP-binding</keyword>
<keyword id="KW-0460">Magnesium</keyword>
<keyword id="KW-0479">Metal-binding</keyword>
<keyword id="KW-0501">Molybdenum cofactor biosynthesis</keyword>
<keyword id="KW-0547">Nucleotide-binding</keyword>
<keyword id="KW-0808">Transferase</keyword>
<comment type="function">
    <text evidence="1">Transfers a GMP moiety from GTP to Mo-molybdopterin (Mo-MPT) cofactor (Moco or molybdenum cofactor) to form Mo-molybdopterin guanine dinucleotide (Mo-MGD) cofactor.</text>
</comment>
<comment type="catalytic activity">
    <reaction evidence="1">
        <text>Mo-molybdopterin + GTP + H(+) = Mo-molybdopterin guanine dinucleotide + diphosphate</text>
        <dbReference type="Rhea" id="RHEA:34243"/>
        <dbReference type="ChEBI" id="CHEBI:15378"/>
        <dbReference type="ChEBI" id="CHEBI:33019"/>
        <dbReference type="ChEBI" id="CHEBI:37565"/>
        <dbReference type="ChEBI" id="CHEBI:71302"/>
        <dbReference type="ChEBI" id="CHEBI:71310"/>
        <dbReference type="EC" id="2.7.7.77"/>
    </reaction>
</comment>
<comment type="cofactor">
    <cofactor evidence="1">
        <name>Mg(2+)</name>
        <dbReference type="ChEBI" id="CHEBI:18420"/>
    </cofactor>
</comment>
<comment type="subunit">
    <text evidence="1">Monomer.</text>
</comment>
<comment type="subcellular location">
    <subcellularLocation>
        <location evidence="1">Cytoplasm</location>
    </subcellularLocation>
</comment>
<comment type="domain">
    <text evidence="1">The N-terminal domain determines nucleotide recognition and specific binding, while the C-terminal domain determines the specific binding to the target protein.</text>
</comment>
<comment type="similarity">
    <text evidence="1">Belongs to the MobA family.</text>
</comment>